<comment type="function">
    <text evidence="1">Carrier protein involved in the D-alanylation of lipoteichoic acid (LTA). The loading of thioester-linked D-alanine onto DltC is catalyzed by D-alanine--D-alanyl carrier protein ligase DltA. The DltC-carried D-alanyl group is further transferred to cell membrane phosphatidylglycerol (PG) by forming an ester bond, probably catalyzed by DltD. D-alanylation of LTA plays an important role in modulating the properties of the cell wall in Gram-positive bacteria, influencing the net charge of the cell wall.</text>
</comment>
<comment type="pathway">
    <text evidence="1">Cell wall biogenesis; lipoteichoic acid biosynthesis.</text>
</comment>
<comment type="subcellular location">
    <subcellularLocation>
        <location evidence="1">Cytoplasm</location>
    </subcellularLocation>
</comment>
<comment type="PTM">
    <text evidence="1">4'-phosphopantetheine is transferred from CoA to a specific serine of apo-DCP.</text>
</comment>
<comment type="similarity">
    <text evidence="1">Belongs to the DltC family.</text>
</comment>
<keyword id="KW-0961">Cell wall biogenesis/degradation</keyword>
<keyword id="KW-0963">Cytoplasm</keyword>
<keyword id="KW-0596">Phosphopantetheine</keyword>
<keyword id="KW-0597">Phosphoprotein</keyword>
<keyword id="KW-1185">Reference proteome</keyword>
<sequence>MDIKSEVLAIIDDLFMEDVSSMMDEDLFDAGVLDSMGTVELIVELESHFNIDIPIAEFGRNDWNTANKIVAGVTELCNA</sequence>
<reference key="1">
    <citation type="journal article" date="2002" name="Proc. Natl. Acad. Sci. U.S.A.">
        <title>Complete genome sequence and comparative genomic analysis of an emerging human pathogen, serotype V Streptococcus agalactiae.</title>
        <authorList>
            <person name="Tettelin H."/>
            <person name="Masignani V."/>
            <person name="Cieslewicz M.J."/>
            <person name="Eisen J.A."/>
            <person name="Peterson S.N."/>
            <person name="Wessels M.R."/>
            <person name="Paulsen I.T."/>
            <person name="Nelson K.E."/>
            <person name="Margarit I."/>
            <person name="Read T.D."/>
            <person name="Madoff L.C."/>
            <person name="Wolf A.M."/>
            <person name="Beanan M.J."/>
            <person name="Brinkac L.M."/>
            <person name="Daugherty S.C."/>
            <person name="DeBoy R.T."/>
            <person name="Durkin A.S."/>
            <person name="Kolonay J.F."/>
            <person name="Madupu R."/>
            <person name="Lewis M.R."/>
            <person name="Radune D."/>
            <person name="Fedorova N.B."/>
            <person name="Scanlan D."/>
            <person name="Khouri H.M."/>
            <person name="Mulligan S."/>
            <person name="Carty H.A."/>
            <person name="Cline R.T."/>
            <person name="Van Aken S.E."/>
            <person name="Gill J."/>
            <person name="Scarselli M."/>
            <person name="Mora M."/>
            <person name="Iacobini E.T."/>
            <person name="Brettoni C."/>
            <person name="Galli G."/>
            <person name="Mariani M."/>
            <person name="Vegni F."/>
            <person name="Maione D."/>
            <person name="Rinaudo D."/>
            <person name="Rappuoli R."/>
            <person name="Telford J.L."/>
            <person name="Kasper D.L."/>
            <person name="Grandi G."/>
            <person name="Fraser C.M."/>
        </authorList>
    </citation>
    <scope>NUCLEOTIDE SEQUENCE [LARGE SCALE GENOMIC DNA]</scope>
    <source>
        <strain>ATCC BAA-611 / 2603 V/R</strain>
    </source>
</reference>
<proteinExistence type="inferred from homology"/>
<gene>
    <name evidence="1" type="primary">dltC</name>
    <name type="ordered locus">SAG1788</name>
</gene>
<protein>
    <recommendedName>
        <fullName evidence="1">D-alanyl carrier protein</fullName>
        <shortName evidence="1">DCP</shortName>
    </recommendedName>
    <alternativeName>
        <fullName evidence="1">D-alanine--poly(phosphoribitol) ligase subunit 2</fullName>
    </alternativeName>
</protein>
<accession>P0A3A1</accession>
<accession>Q8VM65</accession>
<feature type="chain" id="PRO_0000213110" description="D-alanyl carrier protein">
    <location>
        <begin position="1"/>
        <end position="79"/>
    </location>
</feature>
<feature type="domain" description="Carrier" evidence="1">
    <location>
        <begin position="1"/>
        <end position="77"/>
    </location>
</feature>
<feature type="modified residue" description="O-(pantetheine 4'-phosphoryl)serine" evidence="1">
    <location>
        <position position="35"/>
    </location>
</feature>
<dbReference type="EMBL" id="AE009948">
    <property type="protein sequence ID" value="AAN00651.1"/>
    <property type="molecule type" value="Genomic_DNA"/>
</dbReference>
<dbReference type="RefSeq" id="NP_688778.1">
    <property type="nucleotide sequence ID" value="NC_004116.1"/>
</dbReference>
<dbReference type="RefSeq" id="WP_000351975.1">
    <property type="nucleotide sequence ID" value="NC_004116.1"/>
</dbReference>
<dbReference type="SMR" id="P0A3A1"/>
<dbReference type="STRING" id="208435.SAG1788"/>
<dbReference type="GeneID" id="66886626"/>
<dbReference type="KEGG" id="sag:SAG1788"/>
<dbReference type="PATRIC" id="fig|208435.3.peg.1795"/>
<dbReference type="HOGENOM" id="CLU_108696_19_0_9"/>
<dbReference type="OrthoDB" id="6462171at2"/>
<dbReference type="UniPathway" id="UPA00556"/>
<dbReference type="Proteomes" id="UP000000821">
    <property type="component" value="Chromosome"/>
</dbReference>
<dbReference type="GO" id="GO:0005737">
    <property type="term" value="C:cytoplasm"/>
    <property type="evidence" value="ECO:0007669"/>
    <property type="project" value="UniProtKB-SubCell"/>
</dbReference>
<dbReference type="GO" id="GO:0036370">
    <property type="term" value="F:D-alanyl carrier activity"/>
    <property type="evidence" value="ECO:0007669"/>
    <property type="project" value="UniProtKB-UniRule"/>
</dbReference>
<dbReference type="GO" id="GO:0071555">
    <property type="term" value="P:cell wall organization"/>
    <property type="evidence" value="ECO:0007669"/>
    <property type="project" value="UniProtKB-KW"/>
</dbReference>
<dbReference type="GO" id="GO:0070395">
    <property type="term" value="P:lipoteichoic acid biosynthetic process"/>
    <property type="evidence" value="ECO:0007669"/>
    <property type="project" value="UniProtKB-UniRule"/>
</dbReference>
<dbReference type="Gene3D" id="1.10.1200.10">
    <property type="entry name" value="ACP-like"/>
    <property type="match status" value="1"/>
</dbReference>
<dbReference type="HAMAP" id="MF_00565">
    <property type="entry name" value="DltC"/>
    <property type="match status" value="1"/>
</dbReference>
<dbReference type="InterPro" id="IPR036736">
    <property type="entry name" value="ACP-like_sf"/>
</dbReference>
<dbReference type="InterPro" id="IPR003230">
    <property type="entry name" value="DltC"/>
</dbReference>
<dbReference type="InterPro" id="IPR009081">
    <property type="entry name" value="PP-bd_ACP"/>
</dbReference>
<dbReference type="NCBIfam" id="TIGR01688">
    <property type="entry name" value="dltC"/>
    <property type="match status" value="1"/>
</dbReference>
<dbReference type="NCBIfam" id="NF003464">
    <property type="entry name" value="PRK05087.1"/>
    <property type="match status" value="1"/>
</dbReference>
<dbReference type="Pfam" id="PF00550">
    <property type="entry name" value="PP-binding"/>
    <property type="match status" value="1"/>
</dbReference>
<dbReference type="SUPFAM" id="SSF47336">
    <property type="entry name" value="ACP-like"/>
    <property type="match status" value="1"/>
</dbReference>
<dbReference type="PROSITE" id="PS50075">
    <property type="entry name" value="CARRIER"/>
    <property type="match status" value="1"/>
</dbReference>
<evidence type="ECO:0000255" key="1">
    <source>
        <dbReference type="HAMAP-Rule" id="MF_00565"/>
    </source>
</evidence>
<organism>
    <name type="scientific">Streptococcus agalactiae serotype V (strain ATCC BAA-611 / 2603 V/R)</name>
    <dbReference type="NCBI Taxonomy" id="208435"/>
    <lineage>
        <taxon>Bacteria</taxon>
        <taxon>Bacillati</taxon>
        <taxon>Bacillota</taxon>
        <taxon>Bacilli</taxon>
        <taxon>Lactobacillales</taxon>
        <taxon>Streptococcaceae</taxon>
        <taxon>Streptococcus</taxon>
    </lineage>
</organism>
<name>DLTC_STRA5</name>